<protein>
    <recommendedName>
        <fullName evidence="1">Polyamine aminopropyltransferase</fullName>
    </recommendedName>
    <alternativeName>
        <fullName evidence="1">Putrescine aminopropyltransferase</fullName>
        <shortName evidence="1">PAPT</shortName>
    </alternativeName>
    <alternativeName>
        <fullName evidence="1">Spermidine synthase</fullName>
        <shortName evidence="1">SPDS</shortName>
        <shortName evidence="1">SPDSY</shortName>
        <ecNumber evidence="1">2.5.1.16</ecNumber>
    </alternativeName>
</protein>
<comment type="function">
    <text evidence="1">Catalyzes the irreversible transfer of a propylamine group from the amino donor S-adenosylmethioninamine (decarboxy-AdoMet) to putrescine (1,4-diaminobutane) to yield spermidine.</text>
</comment>
<comment type="catalytic activity">
    <reaction evidence="1">
        <text>S-adenosyl 3-(methylsulfanyl)propylamine + putrescine = S-methyl-5'-thioadenosine + spermidine + H(+)</text>
        <dbReference type="Rhea" id="RHEA:12721"/>
        <dbReference type="ChEBI" id="CHEBI:15378"/>
        <dbReference type="ChEBI" id="CHEBI:17509"/>
        <dbReference type="ChEBI" id="CHEBI:57443"/>
        <dbReference type="ChEBI" id="CHEBI:57834"/>
        <dbReference type="ChEBI" id="CHEBI:326268"/>
        <dbReference type="EC" id="2.5.1.16"/>
    </reaction>
</comment>
<comment type="pathway">
    <text evidence="1">Amine and polyamine biosynthesis; spermidine biosynthesis; spermidine from putrescine: step 1/1.</text>
</comment>
<comment type="subunit">
    <text evidence="1">Homodimer or homotetramer.</text>
</comment>
<comment type="subcellular location">
    <subcellularLocation>
        <location evidence="1">Cytoplasm</location>
    </subcellularLocation>
</comment>
<comment type="similarity">
    <text evidence="1">Belongs to the spermidine/spermine synthase family.</text>
</comment>
<reference key="1">
    <citation type="submission" date="2007-11" db="EMBL/GenBank/DDBJ databases">
        <authorList>
            <consortium name="The Salmonella enterica serovar Paratyphi B Genome Sequencing Project"/>
            <person name="McClelland M."/>
            <person name="Sanderson E.K."/>
            <person name="Porwollik S."/>
            <person name="Spieth J."/>
            <person name="Clifton W.S."/>
            <person name="Fulton R."/>
            <person name="Cordes M."/>
            <person name="Wollam A."/>
            <person name="Shah N."/>
            <person name="Pepin K."/>
            <person name="Bhonagiri V."/>
            <person name="Nash W."/>
            <person name="Johnson M."/>
            <person name="Thiruvilangam P."/>
            <person name="Wilson R."/>
        </authorList>
    </citation>
    <scope>NUCLEOTIDE SEQUENCE [LARGE SCALE GENOMIC DNA]</scope>
    <source>
        <strain>ATCC BAA-1250 / SPB7</strain>
    </source>
</reference>
<gene>
    <name evidence="1" type="primary">speE</name>
    <name type="ordered locus">SPAB_00205</name>
</gene>
<name>SPEE_SALPB</name>
<organism>
    <name type="scientific">Salmonella paratyphi B (strain ATCC BAA-1250 / SPB7)</name>
    <dbReference type="NCBI Taxonomy" id="1016998"/>
    <lineage>
        <taxon>Bacteria</taxon>
        <taxon>Pseudomonadati</taxon>
        <taxon>Pseudomonadota</taxon>
        <taxon>Gammaproteobacteria</taxon>
        <taxon>Enterobacterales</taxon>
        <taxon>Enterobacteriaceae</taxon>
        <taxon>Salmonella</taxon>
    </lineage>
</organism>
<evidence type="ECO:0000255" key="1">
    <source>
        <dbReference type="HAMAP-Rule" id="MF_00198"/>
    </source>
</evidence>
<feature type="chain" id="PRO_1000077711" description="Polyamine aminopropyltransferase">
    <location>
        <begin position="1"/>
        <end position="286"/>
    </location>
</feature>
<feature type="domain" description="PABS" evidence="1">
    <location>
        <begin position="5"/>
        <end position="238"/>
    </location>
</feature>
<feature type="active site" description="Proton acceptor" evidence="1">
    <location>
        <position position="158"/>
    </location>
</feature>
<feature type="binding site" evidence="1">
    <location>
        <position position="33"/>
    </location>
    <ligand>
        <name>S-methyl-5'-thioadenosine</name>
        <dbReference type="ChEBI" id="CHEBI:17509"/>
    </ligand>
</feature>
<feature type="binding site" evidence="1">
    <location>
        <position position="64"/>
    </location>
    <ligand>
        <name>spermidine</name>
        <dbReference type="ChEBI" id="CHEBI:57834"/>
    </ligand>
</feature>
<feature type="binding site" evidence="1">
    <location>
        <position position="88"/>
    </location>
    <ligand>
        <name>spermidine</name>
        <dbReference type="ChEBI" id="CHEBI:57834"/>
    </ligand>
</feature>
<feature type="binding site" evidence="1">
    <location>
        <position position="108"/>
    </location>
    <ligand>
        <name>S-methyl-5'-thioadenosine</name>
        <dbReference type="ChEBI" id="CHEBI:17509"/>
    </ligand>
</feature>
<feature type="binding site" evidence="1">
    <location>
        <begin position="140"/>
        <end position="141"/>
    </location>
    <ligand>
        <name>S-methyl-5'-thioadenosine</name>
        <dbReference type="ChEBI" id="CHEBI:17509"/>
    </ligand>
</feature>
<feature type="binding site" evidence="1">
    <location>
        <begin position="158"/>
        <end position="161"/>
    </location>
    <ligand>
        <name>spermidine</name>
        <dbReference type="ChEBI" id="CHEBI:57834"/>
    </ligand>
</feature>
<feature type="binding site" evidence="1">
    <location>
        <position position="165"/>
    </location>
    <ligand>
        <name>S-methyl-5'-thioadenosine</name>
        <dbReference type="ChEBI" id="CHEBI:17509"/>
    </ligand>
</feature>
<sequence>MAENTMWHETLHDQFGQYFAVDNVLYHEKTDHQDLIIFENAAFGRVMALDGVVQTTERDEFIYHEMMTHVPLLAHGHAKHVLIIGGGDGAMLREVTRHKNVETITMVEIDAGVVSFCRQYLPNHNAGSYDDPRFTLVIDDGVNFVNQTHQTFDVIISDCTDPIGPGESLFTSAFYEGCKRCLNPGGIFVAQNGVCFLQQDEALDSHRKLSHYFSDVGFYQAAIPTYYGGIMTFAWATNNDALRHLSSEIIQARFHAAGLKCRYYNPAIHAAAFALPQYLHDALSAQ</sequence>
<keyword id="KW-0963">Cytoplasm</keyword>
<keyword id="KW-0620">Polyamine biosynthesis</keyword>
<keyword id="KW-0745">Spermidine biosynthesis</keyword>
<keyword id="KW-0808">Transferase</keyword>
<accession>A9MZR2</accession>
<dbReference type="EC" id="2.5.1.16" evidence="1"/>
<dbReference type="EMBL" id="CP000886">
    <property type="protein sequence ID" value="ABX65647.1"/>
    <property type="molecule type" value="Genomic_DNA"/>
</dbReference>
<dbReference type="RefSeq" id="WP_000829974.1">
    <property type="nucleotide sequence ID" value="NC_010102.1"/>
</dbReference>
<dbReference type="SMR" id="A9MZR2"/>
<dbReference type="KEGG" id="spq:SPAB_00205"/>
<dbReference type="PATRIC" id="fig|1016998.12.peg.198"/>
<dbReference type="HOGENOM" id="CLU_048199_0_0_6"/>
<dbReference type="BioCyc" id="SENT1016998:SPAB_RS00830-MONOMER"/>
<dbReference type="UniPathway" id="UPA00248">
    <property type="reaction ID" value="UER00314"/>
</dbReference>
<dbReference type="Proteomes" id="UP000008556">
    <property type="component" value="Chromosome"/>
</dbReference>
<dbReference type="GO" id="GO:0005829">
    <property type="term" value="C:cytosol"/>
    <property type="evidence" value="ECO:0007669"/>
    <property type="project" value="TreeGrafter"/>
</dbReference>
<dbReference type="GO" id="GO:0004766">
    <property type="term" value="F:spermidine synthase activity"/>
    <property type="evidence" value="ECO:0007669"/>
    <property type="project" value="UniProtKB-UniRule"/>
</dbReference>
<dbReference type="GO" id="GO:0008295">
    <property type="term" value="P:spermidine biosynthetic process"/>
    <property type="evidence" value="ECO:0007669"/>
    <property type="project" value="UniProtKB-UniRule"/>
</dbReference>
<dbReference type="CDD" id="cd02440">
    <property type="entry name" value="AdoMet_MTases"/>
    <property type="match status" value="1"/>
</dbReference>
<dbReference type="FunFam" id="2.30.140.10:FF:000002">
    <property type="entry name" value="Polyamine aminopropyltransferase"/>
    <property type="match status" value="1"/>
</dbReference>
<dbReference type="FunFam" id="3.40.50.150:FF:000026">
    <property type="entry name" value="Polyamine aminopropyltransferase"/>
    <property type="match status" value="1"/>
</dbReference>
<dbReference type="Gene3D" id="2.30.140.10">
    <property type="entry name" value="Spermidine synthase, tetramerisation domain"/>
    <property type="match status" value="1"/>
</dbReference>
<dbReference type="Gene3D" id="3.40.50.150">
    <property type="entry name" value="Vaccinia Virus protein VP39"/>
    <property type="match status" value="1"/>
</dbReference>
<dbReference type="HAMAP" id="MF_00198">
    <property type="entry name" value="Spermidine_synth"/>
    <property type="match status" value="1"/>
</dbReference>
<dbReference type="InterPro" id="IPR030374">
    <property type="entry name" value="PABS"/>
</dbReference>
<dbReference type="InterPro" id="IPR030373">
    <property type="entry name" value="PABS_CS"/>
</dbReference>
<dbReference type="InterPro" id="IPR029063">
    <property type="entry name" value="SAM-dependent_MTases_sf"/>
</dbReference>
<dbReference type="InterPro" id="IPR001045">
    <property type="entry name" value="Spermi_synthase"/>
</dbReference>
<dbReference type="InterPro" id="IPR035246">
    <property type="entry name" value="Spermidine_synt_N"/>
</dbReference>
<dbReference type="InterPro" id="IPR037163">
    <property type="entry name" value="Spermidine_synt_N_sf"/>
</dbReference>
<dbReference type="NCBIfam" id="NF037959">
    <property type="entry name" value="MFS_SpdSyn"/>
    <property type="match status" value="1"/>
</dbReference>
<dbReference type="NCBIfam" id="NF002010">
    <property type="entry name" value="PRK00811.1"/>
    <property type="match status" value="1"/>
</dbReference>
<dbReference type="NCBIfam" id="TIGR00417">
    <property type="entry name" value="speE"/>
    <property type="match status" value="1"/>
</dbReference>
<dbReference type="PANTHER" id="PTHR11558:SF11">
    <property type="entry name" value="SPERMIDINE SYNTHASE"/>
    <property type="match status" value="1"/>
</dbReference>
<dbReference type="PANTHER" id="PTHR11558">
    <property type="entry name" value="SPERMIDINE/SPERMINE SYNTHASE"/>
    <property type="match status" value="1"/>
</dbReference>
<dbReference type="Pfam" id="PF17284">
    <property type="entry name" value="Spermine_synt_N"/>
    <property type="match status" value="1"/>
</dbReference>
<dbReference type="Pfam" id="PF01564">
    <property type="entry name" value="Spermine_synth"/>
    <property type="match status" value="1"/>
</dbReference>
<dbReference type="SUPFAM" id="SSF53335">
    <property type="entry name" value="S-adenosyl-L-methionine-dependent methyltransferases"/>
    <property type="match status" value="1"/>
</dbReference>
<dbReference type="PROSITE" id="PS01330">
    <property type="entry name" value="PABS_1"/>
    <property type="match status" value="1"/>
</dbReference>
<dbReference type="PROSITE" id="PS51006">
    <property type="entry name" value="PABS_2"/>
    <property type="match status" value="1"/>
</dbReference>
<proteinExistence type="inferred from homology"/>